<gene>
    <name evidence="1" type="primary">rpsG</name>
    <name type="ordered locus">BPP0025</name>
</gene>
<keyword id="KW-0687">Ribonucleoprotein</keyword>
<keyword id="KW-0689">Ribosomal protein</keyword>
<keyword id="KW-0694">RNA-binding</keyword>
<keyword id="KW-0699">rRNA-binding</keyword>
<keyword id="KW-0820">tRNA-binding</keyword>
<sequence length="156" mass="17723">MPRRREVPKREILPDPKFGSVELAKFMNVVMLDGKKAVAERIIYGALEQVQVKTGKDAIEVFNLAINNIKPIVEVKSRRVGGANYQVPVEVRPVRRLALAMRWLREAAKKRGEKSMDLRLAGELIDASEGRGAAMKKREDTHKMAEANKAFSHFRW</sequence>
<proteinExistence type="inferred from homology"/>
<organism>
    <name type="scientific">Bordetella parapertussis (strain 12822 / ATCC BAA-587 / NCTC 13253)</name>
    <dbReference type="NCBI Taxonomy" id="257311"/>
    <lineage>
        <taxon>Bacteria</taxon>
        <taxon>Pseudomonadati</taxon>
        <taxon>Pseudomonadota</taxon>
        <taxon>Betaproteobacteria</taxon>
        <taxon>Burkholderiales</taxon>
        <taxon>Alcaligenaceae</taxon>
        <taxon>Bordetella</taxon>
    </lineage>
</organism>
<accession>Q7W2F9</accession>
<name>RS7_BORPA</name>
<dbReference type="EMBL" id="BX640423">
    <property type="protein sequence ID" value="CAE39766.1"/>
    <property type="molecule type" value="Genomic_DNA"/>
</dbReference>
<dbReference type="RefSeq" id="WP_003806901.1">
    <property type="nucleotide sequence ID" value="NC_002928.3"/>
</dbReference>
<dbReference type="SMR" id="Q7W2F9"/>
<dbReference type="GeneID" id="93206254"/>
<dbReference type="KEGG" id="bpa:BPP0025"/>
<dbReference type="HOGENOM" id="CLU_072226_1_1_4"/>
<dbReference type="Proteomes" id="UP000001421">
    <property type="component" value="Chromosome"/>
</dbReference>
<dbReference type="GO" id="GO:0015935">
    <property type="term" value="C:small ribosomal subunit"/>
    <property type="evidence" value="ECO:0007669"/>
    <property type="project" value="InterPro"/>
</dbReference>
<dbReference type="GO" id="GO:0019843">
    <property type="term" value="F:rRNA binding"/>
    <property type="evidence" value="ECO:0007669"/>
    <property type="project" value="UniProtKB-UniRule"/>
</dbReference>
<dbReference type="GO" id="GO:0003735">
    <property type="term" value="F:structural constituent of ribosome"/>
    <property type="evidence" value="ECO:0007669"/>
    <property type="project" value="InterPro"/>
</dbReference>
<dbReference type="GO" id="GO:0000049">
    <property type="term" value="F:tRNA binding"/>
    <property type="evidence" value="ECO:0007669"/>
    <property type="project" value="UniProtKB-UniRule"/>
</dbReference>
<dbReference type="GO" id="GO:0006412">
    <property type="term" value="P:translation"/>
    <property type="evidence" value="ECO:0007669"/>
    <property type="project" value="UniProtKB-UniRule"/>
</dbReference>
<dbReference type="CDD" id="cd14869">
    <property type="entry name" value="uS7_Bacteria"/>
    <property type="match status" value="1"/>
</dbReference>
<dbReference type="FunFam" id="1.10.455.10:FF:000001">
    <property type="entry name" value="30S ribosomal protein S7"/>
    <property type="match status" value="1"/>
</dbReference>
<dbReference type="Gene3D" id="1.10.455.10">
    <property type="entry name" value="Ribosomal protein S7 domain"/>
    <property type="match status" value="1"/>
</dbReference>
<dbReference type="HAMAP" id="MF_00480_B">
    <property type="entry name" value="Ribosomal_uS7_B"/>
    <property type="match status" value="1"/>
</dbReference>
<dbReference type="InterPro" id="IPR000235">
    <property type="entry name" value="Ribosomal_uS7"/>
</dbReference>
<dbReference type="InterPro" id="IPR005717">
    <property type="entry name" value="Ribosomal_uS7_bac/org-type"/>
</dbReference>
<dbReference type="InterPro" id="IPR020606">
    <property type="entry name" value="Ribosomal_uS7_CS"/>
</dbReference>
<dbReference type="InterPro" id="IPR023798">
    <property type="entry name" value="Ribosomal_uS7_dom"/>
</dbReference>
<dbReference type="InterPro" id="IPR036823">
    <property type="entry name" value="Ribosomal_uS7_dom_sf"/>
</dbReference>
<dbReference type="NCBIfam" id="TIGR01029">
    <property type="entry name" value="rpsG_bact"/>
    <property type="match status" value="1"/>
</dbReference>
<dbReference type="PANTHER" id="PTHR11205">
    <property type="entry name" value="RIBOSOMAL PROTEIN S7"/>
    <property type="match status" value="1"/>
</dbReference>
<dbReference type="Pfam" id="PF00177">
    <property type="entry name" value="Ribosomal_S7"/>
    <property type="match status" value="1"/>
</dbReference>
<dbReference type="PIRSF" id="PIRSF002122">
    <property type="entry name" value="RPS7p_RPS7a_RPS5e_RPS7o"/>
    <property type="match status" value="1"/>
</dbReference>
<dbReference type="SUPFAM" id="SSF47973">
    <property type="entry name" value="Ribosomal protein S7"/>
    <property type="match status" value="1"/>
</dbReference>
<dbReference type="PROSITE" id="PS00052">
    <property type="entry name" value="RIBOSOMAL_S7"/>
    <property type="match status" value="1"/>
</dbReference>
<reference key="1">
    <citation type="journal article" date="2003" name="Nat. Genet.">
        <title>Comparative analysis of the genome sequences of Bordetella pertussis, Bordetella parapertussis and Bordetella bronchiseptica.</title>
        <authorList>
            <person name="Parkhill J."/>
            <person name="Sebaihia M."/>
            <person name="Preston A."/>
            <person name="Murphy L.D."/>
            <person name="Thomson N.R."/>
            <person name="Harris D.E."/>
            <person name="Holden M.T.G."/>
            <person name="Churcher C.M."/>
            <person name="Bentley S.D."/>
            <person name="Mungall K.L."/>
            <person name="Cerdeno-Tarraga A.-M."/>
            <person name="Temple L."/>
            <person name="James K.D."/>
            <person name="Harris B."/>
            <person name="Quail M.A."/>
            <person name="Achtman M."/>
            <person name="Atkin R."/>
            <person name="Baker S."/>
            <person name="Basham D."/>
            <person name="Bason N."/>
            <person name="Cherevach I."/>
            <person name="Chillingworth T."/>
            <person name="Collins M."/>
            <person name="Cronin A."/>
            <person name="Davis P."/>
            <person name="Doggett J."/>
            <person name="Feltwell T."/>
            <person name="Goble A."/>
            <person name="Hamlin N."/>
            <person name="Hauser H."/>
            <person name="Holroyd S."/>
            <person name="Jagels K."/>
            <person name="Leather S."/>
            <person name="Moule S."/>
            <person name="Norberczak H."/>
            <person name="O'Neil S."/>
            <person name="Ormond D."/>
            <person name="Price C."/>
            <person name="Rabbinowitsch E."/>
            <person name="Rutter S."/>
            <person name="Sanders M."/>
            <person name="Saunders D."/>
            <person name="Seeger K."/>
            <person name="Sharp S."/>
            <person name="Simmonds M."/>
            <person name="Skelton J."/>
            <person name="Squares R."/>
            <person name="Squares S."/>
            <person name="Stevens K."/>
            <person name="Unwin L."/>
            <person name="Whitehead S."/>
            <person name="Barrell B.G."/>
            <person name="Maskell D.J."/>
        </authorList>
    </citation>
    <scope>NUCLEOTIDE SEQUENCE [LARGE SCALE GENOMIC DNA]</scope>
    <source>
        <strain>12822 / ATCC BAA-587 / NCTC 13253</strain>
    </source>
</reference>
<protein>
    <recommendedName>
        <fullName evidence="1">Small ribosomal subunit protein uS7</fullName>
    </recommendedName>
    <alternativeName>
        <fullName evidence="2">30S ribosomal protein S7</fullName>
    </alternativeName>
</protein>
<feature type="chain" id="PRO_0000124228" description="Small ribosomal subunit protein uS7">
    <location>
        <begin position="1"/>
        <end position="156"/>
    </location>
</feature>
<comment type="function">
    <text evidence="1">One of the primary rRNA binding proteins, it binds directly to 16S rRNA where it nucleates assembly of the head domain of the 30S subunit. Is located at the subunit interface close to the decoding center, probably blocks exit of the E-site tRNA.</text>
</comment>
<comment type="subunit">
    <text evidence="1">Part of the 30S ribosomal subunit. Contacts proteins S9 and S11.</text>
</comment>
<comment type="similarity">
    <text evidence="1">Belongs to the universal ribosomal protein uS7 family.</text>
</comment>
<evidence type="ECO:0000255" key="1">
    <source>
        <dbReference type="HAMAP-Rule" id="MF_00480"/>
    </source>
</evidence>
<evidence type="ECO:0000305" key="2"/>